<dbReference type="EMBL" id="CP000872">
    <property type="protein sequence ID" value="ABX62306.1"/>
    <property type="molecule type" value="Genomic_DNA"/>
</dbReference>
<dbReference type="RefSeq" id="WP_002964363.1">
    <property type="nucleotide sequence ID" value="NC_010103.1"/>
</dbReference>
<dbReference type="SMR" id="A9M5Q1"/>
<dbReference type="GeneID" id="97533523"/>
<dbReference type="KEGG" id="bcs:BCAN_A1257"/>
<dbReference type="HOGENOM" id="CLU_122625_1_3_5"/>
<dbReference type="PhylomeDB" id="A9M5Q1"/>
<dbReference type="Proteomes" id="UP000001385">
    <property type="component" value="Chromosome I"/>
</dbReference>
<dbReference type="GO" id="GO:1990904">
    <property type="term" value="C:ribonucleoprotein complex"/>
    <property type="evidence" value="ECO:0007669"/>
    <property type="project" value="UniProtKB-KW"/>
</dbReference>
<dbReference type="GO" id="GO:0005840">
    <property type="term" value="C:ribosome"/>
    <property type="evidence" value="ECO:0007669"/>
    <property type="project" value="UniProtKB-KW"/>
</dbReference>
<dbReference type="GO" id="GO:0003735">
    <property type="term" value="F:structural constituent of ribosome"/>
    <property type="evidence" value="ECO:0007669"/>
    <property type="project" value="InterPro"/>
</dbReference>
<dbReference type="GO" id="GO:0000049">
    <property type="term" value="F:tRNA binding"/>
    <property type="evidence" value="ECO:0007669"/>
    <property type="project" value="UniProtKB-UniRule"/>
</dbReference>
<dbReference type="GO" id="GO:0006412">
    <property type="term" value="P:translation"/>
    <property type="evidence" value="ECO:0007669"/>
    <property type="project" value="UniProtKB-UniRule"/>
</dbReference>
<dbReference type="FunFam" id="3.30.70.600:FF:000001">
    <property type="entry name" value="30S ribosomal protein S10"/>
    <property type="match status" value="1"/>
</dbReference>
<dbReference type="Gene3D" id="3.30.70.600">
    <property type="entry name" value="Ribosomal protein S10 domain"/>
    <property type="match status" value="1"/>
</dbReference>
<dbReference type="HAMAP" id="MF_00508">
    <property type="entry name" value="Ribosomal_uS10"/>
    <property type="match status" value="1"/>
</dbReference>
<dbReference type="InterPro" id="IPR001848">
    <property type="entry name" value="Ribosomal_uS10"/>
</dbReference>
<dbReference type="InterPro" id="IPR018268">
    <property type="entry name" value="Ribosomal_uS10_CS"/>
</dbReference>
<dbReference type="InterPro" id="IPR027486">
    <property type="entry name" value="Ribosomal_uS10_dom"/>
</dbReference>
<dbReference type="InterPro" id="IPR036838">
    <property type="entry name" value="Ribosomal_uS10_dom_sf"/>
</dbReference>
<dbReference type="NCBIfam" id="NF001861">
    <property type="entry name" value="PRK00596.1"/>
    <property type="match status" value="1"/>
</dbReference>
<dbReference type="NCBIfam" id="TIGR01049">
    <property type="entry name" value="rpsJ_bact"/>
    <property type="match status" value="1"/>
</dbReference>
<dbReference type="PANTHER" id="PTHR11700">
    <property type="entry name" value="30S RIBOSOMAL PROTEIN S10 FAMILY MEMBER"/>
    <property type="match status" value="1"/>
</dbReference>
<dbReference type="Pfam" id="PF00338">
    <property type="entry name" value="Ribosomal_S10"/>
    <property type="match status" value="1"/>
</dbReference>
<dbReference type="PRINTS" id="PR00971">
    <property type="entry name" value="RIBOSOMALS10"/>
</dbReference>
<dbReference type="SMART" id="SM01403">
    <property type="entry name" value="Ribosomal_S10"/>
    <property type="match status" value="1"/>
</dbReference>
<dbReference type="SUPFAM" id="SSF54999">
    <property type="entry name" value="Ribosomal protein S10"/>
    <property type="match status" value="1"/>
</dbReference>
<dbReference type="PROSITE" id="PS00361">
    <property type="entry name" value="RIBOSOMAL_S10"/>
    <property type="match status" value="1"/>
</dbReference>
<accession>A9M5Q1</accession>
<name>RS10_BRUC2</name>
<keyword id="KW-1185">Reference proteome</keyword>
<keyword id="KW-0687">Ribonucleoprotein</keyword>
<keyword id="KW-0689">Ribosomal protein</keyword>
<gene>
    <name evidence="1" type="primary">rpsJ</name>
    <name type="ordered locus">BCAN_A1257</name>
</gene>
<comment type="function">
    <text evidence="1">Involved in the binding of tRNA to the ribosomes.</text>
</comment>
<comment type="subunit">
    <text evidence="1">Part of the 30S ribosomal subunit.</text>
</comment>
<comment type="similarity">
    <text evidence="1">Belongs to the universal ribosomal protein uS10 family.</text>
</comment>
<proteinExistence type="inferred from homology"/>
<feature type="chain" id="PRO_1000081538" description="Small ribosomal subunit protein uS10">
    <location>
        <begin position="1"/>
        <end position="102"/>
    </location>
</feature>
<evidence type="ECO:0000255" key="1">
    <source>
        <dbReference type="HAMAP-Rule" id="MF_00508"/>
    </source>
</evidence>
<evidence type="ECO:0000305" key="2"/>
<organism>
    <name type="scientific">Brucella canis (strain ATCC 23365 / NCTC 10854 / RM-666)</name>
    <dbReference type="NCBI Taxonomy" id="483179"/>
    <lineage>
        <taxon>Bacteria</taxon>
        <taxon>Pseudomonadati</taxon>
        <taxon>Pseudomonadota</taxon>
        <taxon>Alphaproteobacteria</taxon>
        <taxon>Hyphomicrobiales</taxon>
        <taxon>Brucellaceae</taxon>
        <taxon>Brucella/Ochrobactrum group</taxon>
        <taxon>Brucella</taxon>
    </lineage>
</organism>
<sequence>MNGQNIRIRLKAFDHRILDASTREIVSTAKRTGANVRGPIPLPTRIEKFTVNRSPHIDKKSREQFEMRTHKRLLDIVDPTPQTVDALMKLDLSAGVDVEIKL</sequence>
<protein>
    <recommendedName>
        <fullName evidence="1">Small ribosomal subunit protein uS10</fullName>
    </recommendedName>
    <alternativeName>
        <fullName evidence="2">30S ribosomal protein S10</fullName>
    </alternativeName>
</protein>
<reference key="1">
    <citation type="submission" date="2007-10" db="EMBL/GenBank/DDBJ databases">
        <title>Brucella canis ATCC 23365 whole genome shotgun sequencing project.</title>
        <authorList>
            <person name="Setubal J.C."/>
            <person name="Bowns C."/>
            <person name="Boyle S."/>
            <person name="Crasta O.R."/>
            <person name="Czar M.J."/>
            <person name="Dharmanolla C."/>
            <person name="Gillespie J.J."/>
            <person name="Kenyon R.W."/>
            <person name="Lu J."/>
            <person name="Mane S."/>
            <person name="Mohapatra S."/>
            <person name="Nagrani S."/>
            <person name="Purkayastha A."/>
            <person name="Rajasimha H.K."/>
            <person name="Shallom J.M."/>
            <person name="Shallom S."/>
            <person name="Shukla M."/>
            <person name="Snyder E.E."/>
            <person name="Sobral B.W."/>
            <person name="Wattam A.R."/>
            <person name="Will R."/>
            <person name="Williams K."/>
            <person name="Yoo H."/>
            <person name="Bruce D."/>
            <person name="Detter C."/>
            <person name="Munk C."/>
            <person name="Brettin T.S."/>
        </authorList>
    </citation>
    <scope>NUCLEOTIDE SEQUENCE [LARGE SCALE GENOMIC DNA]</scope>
    <source>
        <strain>ATCC 23365 / NCTC 10854 / RM-666</strain>
    </source>
</reference>